<keyword id="KW-0217">Developmental protein</keyword>
<keyword id="KW-1015">Disulfide bond</keyword>
<keyword id="KW-0272">Extracellular matrix</keyword>
<keyword id="KW-0325">Glycoprotein</keyword>
<keyword id="KW-0449">Lipoprotein</keyword>
<keyword id="KW-1185">Reference proteome</keyword>
<keyword id="KW-0964">Secreted</keyword>
<keyword id="KW-0732">Signal</keyword>
<keyword id="KW-0879">Wnt signaling pathway</keyword>
<accession>P33945</accession>
<accession>Q7T0M2</accession>
<accession>Q91928</accession>
<feature type="signal peptide" evidence="4">
    <location>
        <begin position="1"/>
        <end position="16"/>
    </location>
</feature>
<feature type="chain" id="PRO_0000041437" description="Protein Wnt-5b">
    <location>
        <begin position="17"/>
        <end position="360"/>
    </location>
</feature>
<feature type="lipid moiety-binding region" description="O-palmitoleoyl serine; by PORCN" evidence="3">
    <location>
        <position position="224"/>
    </location>
</feature>
<feature type="glycosylation site" description="N-linked (GlcNAc...) asparagine" evidence="4">
    <location>
        <position position="94"/>
    </location>
</feature>
<feature type="glycosylation site" description="N-linked (GlcNAc...) asparagine" evidence="4">
    <location>
        <position position="100"/>
    </location>
</feature>
<feature type="glycosylation site" description="N-linked (GlcNAc...) asparagine" evidence="4">
    <location>
        <position position="292"/>
    </location>
</feature>
<feature type="glycosylation site" description="N-linked (GlcNAc...) asparagine" evidence="4">
    <location>
        <position position="306"/>
    </location>
</feature>
<feature type="disulfide bond" evidence="2">
    <location>
        <begin position="84"/>
        <end position="95"/>
    </location>
</feature>
<feature type="disulfide bond" evidence="2">
    <location>
        <begin position="134"/>
        <end position="142"/>
    </location>
</feature>
<feature type="disulfide bond" evidence="2">
    <location>
        <begin position="144"/>
        <end position="162"/>
    </location>
</feature>
<feature type="disulfide bond" evidence="2">
    <location>
        <begin position="218"/>
        <end position="232"/>
    </location>
</feature>
<feature type="disulfide bond" evidence="2">
    <location>
        <begin position="220"/>
        <end position="227"/>
    </location>
</feature>
<feature type="disulfide bond" evidence="2">
    <location>
        <begin position="289"/>
        <end position="320"/>
    </location>
</feature>
<feature type="disulfide bond" evidence="2">
    <location>
        <begin position="305"/>
        <end position="315"/>
    </location>
</feature>
<feature type="disulfide bond" evidence="2">
    <location>
        <begin position="319"/>
        <end position="359"/>
    </location>
</feature>
<feature type="disulfide bond" evidence="2">
    <location>
        <begin position="335"/>
        <end position="350"/>
    </location>
</feature>
<feature type="disulfide bond" evidence="2">
    <location>
        <begin position="337"/>
        <end position="347"/>
    </location>
</feature>
<feature type="disulfide bond" evidence="2">
    <location>
        <begin position="342"/>
        <end position="343"/>
    </location>
</feature>
<feature type="sequence conflict" description="In Ref. 3; CAA53784." evidence="6" ref="3">
    <original>S</original>
    <variation>C</variation>
    <location>
        <position position="15"/>
    </location>
</feature>
<feature type="sequence conflict" description="In Ref. 1; CAA51916." evidence="6" ref="1">
    <original>L</original>
    <variation>M</variation>
    <location>
        <position position="30"/>
    </location>
</feature>
<feature type="sequence conflict" description="In Ref. 1; CAA51916." evidence="6" ref="1">
    <original>A</original>
    <variation>S</variation>
    <location>
        <position position="116"/>
    </location>
</feature>
<comment type="function">
    <text>Ligand for members of the frizzled family of seven transmembrane receptors. Probable developmental protein. May be a signaling molecule which affects the development of discrete regions of tissues. Is likely to signal over only few cell diameters.</text>
</comment>
<comment type="subcellular location">
    <subcellularLocation>
        <location>Secreted</location>
        <location>Extracellular space</location>
        <location>Extracellular matrix</location>
    </subcellularLocation>
</comment>
<comment type="developmental stage">
    <text evidence="5">Expressed from the early gastrula stage onwards.</text>
</comment>
<comment type="PTM">
    <text evidence="1 3">Palmitoleoylation is required for efficient binding to frizzled receptors. Depalmitoleoylation leads to Wnt signaling pathway inhibition.</text>
</comment>
<comment type="similarity">
    <text evidence="6">Belongs to the Wnt family.</text>
</comment>
<proteinExistence type="evidence at transcript level"/>
<reference key="1">
    <citation type="submission" date="1993-06" db="EMBL/GenBank/DDBJ databases">
        <title>Differential Xwnt-5C expression during early development of Xenopus laevis.</title>
        <authorList>
            <person name="Koster J.G."/>
            <person name="Kuiken G.A."/>
            <person name="Stegeman B."/>
            <person name="Peterson J."/>
            <person name="Eizema K."/>
            <person name="Stabel L."/>
            <person name="Dekker E.J."/>
            <person name="Destre O.H.J."/>
        </authorList>
    </citation>
    <scope>NUCLEOTIDE SEQUENCE [MRNA]</scope>
    <scope>DEVELOPMENTAL STAGE</scope>
    <source>
        <tissue>Neurula</tissue>
    </source>
</reference>
<reference key="2">
    <citation type="submission" date="2003-08" db="EMBL/GenBank/DDBJ databases">
        <authorList>
            <consortium name="NIH - Xenopus Gene Collection (XGC) project"/>
        </authorList>
    </citation>
    <scope>NUCLEOTIDE SEQUENCE [LARGE SCALE MRNA]</scope>
    <source>
        <tissue>Ovary</tissue>
    </source>
</reference>
<reference key="3">
    <citation type="journal article" date="1994" name="Nucleic Acids Res.">
        <title>The promoter of the Xwnt-5C gene contains octamer and AP-2 motifs functional in Xenopus embryos.</title>
        <authorList>
            <person name="Kuiken G.A."/>
            <person name="Bertens P.J.A."/>
            <person name="Peterson-Maduro J."/>
            <person name="Veenstra G.J.C."/>
            <person name="Koster J.G."/>
            <person name="Destree O.H.J."/>
        </authorList>
    </citation>
    <scope>NUCLEOTIDE SEQUENCE [GENOMIC DNA] OF 1-27</scope>
    <source>
        <tissue>Embryo</tissue>
    </source>
</reference>
<gene>
    <name type="primary">wnt5b</name>
    <name type="synonym">wnt5c</name>
</gene>
<dbReference type="EMBL" id="X73510">
    <property type="protein sequence ID" value="CAA51916.1"/>
    <property type="molecule type" value="mRNA"/>
</dbReference>
<dbReference type="EMBL" id="BC056128">
    <property type="protein sequence ID" value="AAH56128.1"/>
    <property type="molecule type" value="mRNA"/>
</dbReference>
<dbReference type="EMBL" id="X76190">
    <property type="protein sequence ID" value="CAA53784.1"/>
    <property type="molecule type" value="Genomic_DNA"/>
</dbReference>
<dbReference type="PIR" id="S34173">
    <property type="entry name" value="S34173"/>
</dbReference>
<dbReference type="RefSeq" id="NP_001080150.1">
    <property type="nucleotide sequence ID" value="NM_001086681.1"/>
</dbReference>
<dbReference type="SMR" id="P33945"/>
<dbReference type="GlyCosmos" id="P33945">
    <property type="glycosylation" value="4 sites, No reported glycans"/>
</dbReference>
<dbReference type="DNASU" id="379842"/>
<dbReference type="GeneID" id="379842"/>
<dbReference type="KEGG" id="xla:379842"/>
<dbReference type="AGR" id="Xenbase:XB-GENE-865372"/>
<dbReference type="CTD" id="379842"/>
<dbReference type="Xenbase" id="XB-GENE-865372">
    <property type="gene designation" value="wnt5b.S"/>
</dbReference>
<dbReference type="OrthoDB" id="5945655at2759"/>
<dbReference type="Proteomes" id="UP000186698">
    <property type="component" value="Chromosome 3S"/>
</dbReference>
<dbReference type="Bgee" id="379842">
    <property type="expression patterns" value="Expressed in lung and 13 other cell types or tissues"/>
</dbReference>
<dbReference type="GO" id="GO:0005615">
    <property type="term" value="C:extracellular space"/>
    <property type="evidence" value="ECO:0000318"/>
    <property type="project" value="GO_Central"/>
</dbReference>
<dbReference type="GO" id="GO:0005125">
    <property type="term" value="F:cytokine activity"/>
    <property type="evidence" value="ECO:0000318"/>
    <property type="project" value="GO_Central"/>
</dbReference>
<dbReference type="GO" id="GO:0005109">
    <property type="term" value="F:frizzled binding"/>
    <property type="evidence" value="ECO:0000318"/>
    <property type="project" value="GO_Central"/>
</dbReference>
<dbReference type="GO" id="GO:0060070">
    <property type="term" value="P:canonical Wnt signaling pathway"/>
    <property type="evidence" value="ECO:0000318"/>
    <property type="project" value="GO_Central"/>
</dbReference>
<dbReference type="GO" id="GO:0045165">
    <property type="term" value="P:cell fate commitment"/>
    <property type="evidence" value="ECO:0000318"/>
    <property type="project" value="GO_Central"/>
</dbReference>
<dbReference type="GO" id="GO:0042692">
    <property type="term" value="P:muscle cell differentiation"/>
    <property type="evidence" value="ECO:0000250"/>
    <property type="project" value="UniProtKB"/>
</dbReference>
<dbReference type="GO" id="GO:0030182">
    <property type="term" value="P:neuron differentiation"/>
    <property type="evidence" value="ECO:0000318"/>
    <property type="project" value="GO_Central"/>
</dbReference>
<dbReference type="GO" id="GO:1904105">
    <property type="term" value="P:positive regulation of convergent extension involved in gastrulation"/>
    <property type="evidence" value="ECO:0000250"/>
    <property type="project" value="UniProtKB"/>
</dbReference>
<dbReference type="GO" id="GO:2000052">
    <property type="term" value="P:positive regulation of non-canonical Wnt signaling pathway"/>
    <property type="evidence" value="ECO:0000250"/>
    <property type="project" value="UniProtKB"/>
</dbReference>
<dbReference type="FunFam" id="3.30.2460.20:FF:000001">
    <property type="entry name" value="Wnt homolog"/>
    <property type="match status" value="1"/>
</dbReference>
<dbReference type="Gene3D" id="3.30.2460.20">
    <property type="match status" value="1"/>
</dbReference>
<dbReference type="InterPro" id="IPR005817">
    <property type="entry name" value="Wnt"/>
</dbReference>
<dbReference type="InterPro" id="IPR043158">
    <property type="entry name" value="Wnt_C"/>
</dbReference>
<dbReference type="InterPro" id="IPR018161">
    <property type="entry name" value="Wnt_CS"/>
</dbReference>
<dbReference type="PANTHER" id="PTHR12027:SF87">
    <property type="entry name" value="PROTEIN WNT-5B"/>
    <property type="match status" value="1"/>
</dbReference>
<dbReference type="PANTHER" id="PTHR12027">
    <property type="entry name" value="WNT RELATED"/>
    <property type="match status" value="1"/>
</dbReference>
<dbReference type="Pfam" id="PF00110">
    <property type="entry name" value="wnt"/>
    <property type="match status" value="1"/>
</dbReference>
<dbReference type="PRINTS" id="PR01349">
    <property type="entry name" value="WNTPROTEIN"/>
</dbReference>
<dbReference type="SMART" id="SM00097">
    <property type="entry name" value="WNT1"/>
    <property type="match status" value="1"/>
</dbReference>
<dbReference type="PROSITE" id="PS00246">
    <property type="entry name" value="WNT1"/>
    <property type="match status" value="1"/>
</dbReference>
<evidence type="ECO:0000250" key="1">
    <source>
        <dbReference type="UniProtKB" id="P27467"/>
    </source>
</evidence>
<evidence type="ECO:0000250" key="2">
    <source>
        <dbReference type="UniProtKB" id="P28026"/>
    </source>
</evidence>
<evidence type="ECO:0000250" key="3">
    <source>
        <dbReference type="UniProtKB" id="P56704"/>
    </source>
</evidence>
<evidence type="ECO:0000255" key="4"/>
<evidence type="ECO:0000269" key="5">
    <source ref="1"/>
</evidence>
<evidence type="ECO:0000305" key="6"/>
<protein>
    <recommendedName>
        <fullName>Protein Wnt-5b</fullName>
    </recommendedName>
    <alternativeName>
        <fullName>Protein Wnt-5c</fullName>
        <shortName>XWnt-5C</shortName>
    </alternativeName>
</protein>
<sequence>MTPILRLLLLSSLLSCWKQSVVGANSWWSLALNPVQRPEMFIIGAQPLCSQLTGLSPGQRKLCQLYQDHMVHIGEGAKTGIKECQHQFKHRRWNCSTVDNNSVFGRVMQIGSREAAFTYAISSAGVVNAISRACREGELSTCGCSRTPRPKDLPRDWLWGGCGDNVEYGYRFAKEFVDAREREKNFPKGSEEQARSLMNLQNNEAGRRAVYKLADVACKCHGVSGSCSLKTCWLQLADFRKVGEYIKEKYDSAASMRLNKRNKLEQVNQRFNPPTGEDLVYLDPSPDYCLYNETTGSLGTHGRQCNKTSEGMDGCELMCCGRGYDQFKTVQVERCHCKFQWCCFVKCKKCTEIVDQFVCK</sequence>
<name>WNT5B_XENLA</name>
<organism>
    <name type="scientific">Xenopus laevis</name>
    <name type="common">African clawed frog</name>
    <dbReference type="NCBI Taxonomy" id="8355"/>
    <lineage>
        <taxon>Eukaryota</taxon>
        <taxon>Metazoa</taxon>
        <taxon>Chordata</taxon>
        <taxon>Craniata</taxon>
        <taxon>Vertebrata</taxon>
        <taxon>Euteleostomi</taxon>
        <taxon>Amphibia</taxon>
        <taxon>Batrachia</taxon>
        <taxon>Anura</taxon>
        <taxon>Pipoidea</taxon>
        <taxon>Pipidae</taxon>
        <taxon>Xenopodinae</taxon>
        <taxon>Xenopus</taxon>
        <taxon>Xenopus</taxon>
    </lineage>
</organism>